<geneLocation type="plasmid">
    <name>NTP513</name>
</geneLocation>
<feature type="chain" id="PRO_0000196352" description="CFA/I fimbrial subunit E">
    <location>
        <begin position="1"/>
        <end position="360"/>
    </location>
</feature>
<feature type="strand" evidence="2">
    <location>
        <begin position="30"/>
        <end position="40"/>
    </location>
</feature>
<feature type="strand" evidence="4">
    <location>
        <begin position="41"/>
        <end position="43"/>
    </location>
</feature>
<feature type="strand" evidence="2">
    <location>
        <begin position="48"/>
        <end position="58"/>
    </location>
</feature>
<feature type="strand" evidence="3">
    <location>
        <begin position="60"/>
        <end position="62"/>
    </location>
</feature>
<feature type="strand" evidence="2">
    <location>
        <begin position="66"/>
        <end position="71"/>
    </location>
</feature>
<feature type="strand" evidence="2">
    <location>
        <begin position="73"/>
        <end position="76"/>
    </location>
</feature>
<feature type="helix" evidence="2">
    <location>
        <begin position="78"/>
        <end position="80"/>
    </location>
</feature>
<feature type="strand" evidence="2">
    <location>
        <begin position="89"/>
        <end position="92"/>
    </location>
</feature>
<feature type="strand" evidence="2">
    <location>
        <begin position="98"/>
        <end position="106"/>
    </location>
</feature>
<feature type="turn" evidence="2">
    <location>
        <begin position="107"/>
        <end position="109"/>
    </location>
</feature>
<feature type="strand" evidence="2">
    <location>
        <begin position="112"/>
        <end position="124"/>
    </location>
</feature>
<feature type="strand" evidence="3">
    <location>
        <begin position="143"/>
        <end position="145"/>
    </location>
</feature>
<feature type="strand" evidence="2">
    <location>
        <begin position="150"/>
        <end position="157"/>
    </location>
</feature>
<feature type="helix" evidence="2">
    <location>
        <begin position="161"/>
        <end position="164"/>
    </location>
</feature>
<feature type="strand" evidence="3">
    <location>
        <begin position="165"/>
        <end position="167"/>
    </location>
</feature>
<feature type="strand" evidence="2">
    <location>
        <begin position="169"/>
        <end position="181"/>
    </location>
</feature>
<feature type="strand" evidence="2">
    <location>
        <begin position="186"/>
        <end position="199"/>
    </location>
</feature>
<feature type="helix" evidence="2">
    <location>
        <begin position="201"/>
        <end position="203"/>
    </location>
</feature>
<feature type="strand" evidence="2">
    <location>
        <begin position="205"/>
        <end position="207"/>
    </location>
</feature>
<feature type="strand" evidence="2">
    <location>
        <begin position="215"/>
        <end position="218"/>
    </location>
</feature>
<feature type="strand" evidence="2">
    <location>
        <begin position="222"/>
        <end position="225"/>
    </location>
</feature>
<feature type="strand" evidence="2">
    <location>
        <begin position="228"/>
        <end position="240"/>
    </location>
</feature>
<feature type="strand" evidence="2">
    <location>
        <begin position="248"/>
        <end position="255"/>
    </location>
</feature>
<feature type="strand" evidence="2">
    <location>
        <begin position="261"/>
        <end position="263"/>
    </location>
</feature>
<feature type="strand" evidence="2">
    <location>
        <begin position="265"/>
        <end position="269"/>
    </location>
</feature>
<feature type="strand" evidence="2">
    <location>
        <begin position="272"/>
        <end position="285"/>
    </location>
</feature>
<feature type="strand" evidence="2">
    <location>
        <begin position="288"/>
        <end position="290"/>
    </location>
</feature>
<feature type="strand" evidence="2">
    <location>
        <begin position="298"/>
        <end position="302"/>
    </location>
</feature>
<feature type="strand" evidence="2">
    <location>
        <begin position="308"/>
        <end position="310"/>
    </location>
</feature>
<feature type="strand" evidence="2">
    <location>
        <begin position="315"/>
        <end position="318"/>
    </location>
</feature>
<feature type="strand" evidence="2">
    <location>
        <begin position="324"/>
        <end position="339"/>
    </location>
</feature>
<feature type="strand" evidence="2">
    <location>
        <begin position="342"/>
        <end position="355"/>
    </location>
</feature>
<feature type="strand" evidence="2">
    <location>
        <begin position="358"/>
        <end position="360"/>
    </location>
</feature>
<sequence length="360" mass="39903">MNKILFIFTLFFSSGFFTFAVSADKNPGSENMTNTIGPHDRGGSSPIYNILNSYLTAYNGSHHLYDRMSFLCLSSQNTLNGACPSSDAPGTATIDGETNITLQFTEKRSLIKRELQIKGYKQFLFKNANCPSKLALNSSHFQCNREQASGATLSLYIPAGELNKLPFGGVWNAVLKLNVKRRYDTTYGTYTINITVNLTDKGNIQIWLPQFKSNARVDLNLRPTGGGTYIGRNSVDMCFYDGYSTNSSSLEIRFQDDNSKSDGKFYLKKINDDSKELVYTLSLLLAGKNLTPTNGQALNINTASLETNWNRITAVTMPEISVPVLCWPGRLQLDAKVKNPEAGQYMGNIKITFTPSSQTL</sequence>
<evidence type="ECO:0000305" key="1"/>
<evidence type="ECO:0007829" key="2">
    <source>
        <dbReference type="PDB" id="2HB0"/>
    </source>
</evidence>
<evidence type="ECO:0007829" key="3">
    <source>
        <dbReference type="PDB" id="3F83"/>
    </source>
</evidence>
<evidence type="ECO:0007829" key="4">
    <source>
        <dbReference type="PDB" id="6K73"/>
    </source>
</evidence>
<protein>
    <recommendedName>
        <fullName>CFA/I fimbrial subunit E</fullName>
    </recommendedName>
    <alternativeName>
        <fullName>Colonization factor antigen I subunit E</fullName>
    </alternativeName>
</protein>
<keyword id="KW-0002">3D-structure</keyword>
<keyword id="KW-0281">Fimbrium</keyword>
<keyword id="KW-0614">Plasmid</keyword>
<reference key="1">
    <citation type="journal article" date="1989" name="Microb. Pathog.">
        <title>The nucleotide sequence of the first two genes of the CFA/I fimbrial operon of human enterotoxigenic Escherichia coli.</title>
        <authorList>
            <person name="Hamers A.M."/>
            <person name="Pel H.J."/>
            <person name="Willshaw G.A."/>
            <person name="Kusters J.G."/>
            <person name="van der Zeijst B.A.M."/>
            <person name="Gaastra W."/>
        </authorList>
    </citation>
    <scope>NUCLEOTIDE SEQUENCE [GENOMIC DNA]</scope>
    <source>
        <strain>ETEC</strain>
    </source>
</reference>
<reference key="2">
    <citation type="journal article" date="1992" name="DNA Seq.">
        <title>The complete nucleotide sequence of region 1 of the CFA/I fimbrial operon of human enterotoxigenic Escherichia coli.</title>
        <authorList>
            <person name="Jordi B.J.A.M."/>
            <person name="Willshaw G.A."/>
            <person name="van der Zeijst B.A.M."/>
            <person name="Gaastra W."/>
        </authorList>
    </citation>
    <scope>NUCLEOTIDE SEQUENCE [GENOMIC DNA]</scope>
</reference>
<accession>P25734</accession>
<gene>
    <name type="primary">cfaE</name>
</gene>
<comment type="subcellular location">
    <subcellularLocation>
        <location evidence="1">Fimbrium</location>
    </subcellularLocation>
</comment>
<organism>
    <name type="scientific">Escherichia coli</name>
    <dbReference type="NCBI Taxonomy" id="562"/>
    <lineage>
        <taxon>Bacteria</taxon>
        <taxon>Pseudomonadati</taxon>
        <taxon>Pseudomonadota</taxon>
        <taxon>Gammaproteobacteria</taxon>
        <taxon>Enterobacterales</taxon>
        <taxon>Enterobacteriaceae</taxon>
        <taxon>Escherichia</taxon>
    </lineage>
</organism>
<proteinExistence type="evidence at protein level"/>
<name>CFAE_ECOLX</name>
<dbReference type="EMBL" id="M55661">
    <property type="protein sequence ID" value="AAC41417.1"/>
    <property type="molecule type" value="Genomic_DNA"/>
</dbReference>
<dbReference type="PIR" id="D56617">
    <property type="entry name" value="D56617"/>
</dbReference>
<dbReference type="RefSeq" id="WP_001033658.1">
    <property type="nucleotide sequence ID" value="NZ_UEMW01000053.1"/>
</dbReference>
<dbReference type="PDB" id="2HB0">
    <property type="method" value="X-ray"/>
    <property type="resolution" value="2.30 A"/>
    <property type="chains" value="A/B=23-360"/>
</dbReference>
<dbReference type="PDB" id="3F83">
    <property type="method" value="X-ray"/>
    <property type="resolution" value="2.30 A"/>
    <property type="chains" value="A=23-360"/>
</dbReference>
<dbReference type="PDB" id="3VAC">
    <property type="method" value="X-ray"/>
    <property type="resolution" value="2.60 A"/>
    <property type="chains" value="A/B=23-360"/>
</dbReference>
<dbReference type="PDB" id="6K73">
    <property type="method" value="X-ray"/>
    <property type="resolution" value="2.77 A"/>
    <property type="chains" value="C/D=24-360"/>
</dbReference>
<dbReference type="PDBsum" id="2HB0"/>
<dbReference type="PDBsum" id="3F83"/>
<dbReference type="PDBsum" id="3VAC"/>
<dbReference type="PDBsum" id="6K73"/>
<dbReference type="SMR" id="P25734"/>
<dbReference type="UniLectin" id="P25734"/>
<dbReference type="EvolutionaryTrace" id="P25734"/>
<dbReference type="GO" id="GO:0009289">
    <property type="term" value="C:pilus"/>
    <property type="evidence" value="ECO:0007669"/>
    <property type="project" value="UniProtKB-SubCell"/>
</dbReference>
<dbReference type="Gene3D" id="2.60.40.2520">
    <property type="entry name" value="CFA/I fimbrial subunit E, adhesin domain"/>
    <property type="match status" value="1"/>
</dbReference>
<dbReference type="Gene3D" id="2.60.40.2040">
    <property type="entry name" value="CFA/I fimbrial subunit E, pilin domain"/>
    <property type="match status" value="1"/>
</dbReference>
<dbReference type="InterPro" id="IPR010888">
    <property type="entry name" value="CblD"/>
</dbReference>
<dbReference type="InterPro" id="IPR043037">
    <property type="entry name" value="CfaE_adhesin"/>
</dbReference>
<dbReference type="Pfam" id="PF07434">
    <property type="entry name" value="CblD"/>
    <property type="match status" value="1"/>
</dbReference>